<feature type="chain" id="PRO_0000338899" description="Translation initiation factor IF-1">
    <location>
        <begin position="1"/>
        <end position="76"/>
    </location>
</feature>
<feature type="domain" description="S1-like" evidence="1">
    <location>
        <begin position="1"/>
        <end position="76"/>
    </location>
</feature>
<protein>
    <recommendedName>
        <fullName evidence="1">Translation initiation factor IF-1</fullName>
    </recommendedName>
</protein>
<comment type="function">
    <text evidence="1">One of the essential components for the initiation of protein synthesis. Stabilizes the binding of IF-2 and IF-3 on the 30S subunit to which N-formylmethionyl-tRNA(fMet) subsequently binds. Helps modulate mRNA selection, yielding the 30S pre-initiation complex (PIC). Upon addition of the 50S ribosomal subunit IF-1, IF-2 and IF-3 are released leaving the mature 70S translation initiation complex.</text>
</comment>
<comment type="subunit">
    <text evidence="1">Component of the 30S ribosomal translation pre-initiation complex which assembles on the 30S ribosome in the order IF-2 and IF-3, IF-1 and N-formylmethionyl-tRNA(fMet); mRNA recruitment can occur at any time during PIC assembly.</text>
</comment>
<comment type="subcellular location">
    <subcellularLocation>
        <location evidence="1">Cytoplasm</location>
    </subcellularLocation>
</comment>
<comment type="similarity">
    <text evidence="1">Belongs to the IF-1 family.</text>
</comment>
<sequence>MEDMAKKDGVIEIEGVVTEALPNAMFRVELTNKHIVLAHISGKMRQHYIRILPEDRVVVELSPYDLTRGRIVYRYK</sequence>
<dbReference type="EMBL" id="CP000910">
    <property type="protein sequence ID" value="ABY23853.1"/>
    <property type="molecule type" value="Genomic_DNA"/>
</dbReference>
<dbReference type="SMR" id="A9WSR5"/>
<dbReference type="STRING" id="288705.RSal33209_2121"/>
<dbReference type="KEGG" id="rsa:RSal33209_2121"/>
<dbReference type="eggNOG" id="COG0361">
    <property type="taxonomic scope" value="Bacteria"/>
</dbReference>
<dbReference type="HOGENOM" id="CLU_151267_1_0_11"/>
<dbReference type="Proteomes" id="UP000002007">
    <property type="component" value="Chromosome"/>
</dbReference>
<dbReference type="GO" id="GO:0005829">
    <property type="term" value="C:cytosol"/>
    <property type="evidence" value="ECO:0007669"/>
    <property type="project" value="TreeGrafter"/>
</dbReference>
<dbReference type="GO" id="GO:0043022">
    <property type="term" value="F:ribosome binding"/>
    <property type="evidence" value="ECO:0007669"/>
    <property type="project" value="UniProtKB-UniRule"/>
</dbReference>
<dbReference type="GO" id="GO:0019843">
    <property type="term" value="F:rRNA binding"/>
    <property type="evidence" value="ECO:0007669"/>
    <property type="project" value="UniProtKB-UniRule"/>
</dbReference>
<dbReference type="GO" id="GO:0003743">
    <property type="term" value="F:translation initiation factor activity"/>
    <property type="evidence" value="ECO:0007669"/>
    <property type="project" value="UniProtKB-UniRule"/>
</dbReference>
<dbReference type="CDD" id="cd04451">
    <property type="entry name" value="S1_IF1"/>
    <property type="match status" value="1"/>
</dbReference>
<dbReference type="FunFam" id="2.40.50.140:FF:000002">
    <property type="entry name" value="Translation initiation factor IF-1"/>
    <property type="match status" value="1"/>
</dbReference>
<dbReference type="Gene3D" id="2.40.50.140">
    <property type="entry name" value="Nucleic acid-binding proteins"/>
    <property type="match status" value="1"/>
</dbReference>
<dbReference type="HAMAP" id="MF_00075">
    <property type="entry name" value="IF_1"/>
    <property type="match status" value="1"/>
</dbReference>
<dbReference type="InterPro" id="IPR012340">
    <property type="entry name" value="NA-bd_OB-fold"/>
</dbReference>
<dbReference type="InterPro" id="IPR006196">
    <property type="entry name" value="RNA-binding_domain_S1_IF1"/>
</dbReference>
<dbReference type="InterPro" id="IPR004368">
    <property type="entry name" value="TIF_IF1"/>
</dbReference>
<dbReference type="NCBIfam" id="TIGR00008">
    <property type="entry name" value="infA"/>
    <property type="match status" value="1"/>
</dbReference>
<dbReference type="PANTHER" id="PTHR33370">
    <property type="entry name" value="TRANSLATION INITIATION FACTOR IF-1, CHLOROPLASTIC"/>
    <property type="match status" value="1"/>
</dbReference>
<dbReference type="PANTHER" id="PTHR33370:SF1">
    <property type="entry name" value="TRANSLATION INITIATION FACTOR IF-1, CHLOROPLASTIC"/>
    <property type="match status" value="1"/>
</dbReference>
<dbReference type="Pfam" id="PF01176">
    <property type="entry name" value="eIF-1a"/>
    <property type="match status" value="1"/>
</dbReference>
<dbReference type="SUPFAM" id="SSF50249">
    <property type="entry name" value="Nucleic acid-binding proteins"/>
    <property type="match status" value="1"/>
</dbReference>
<dbReference type="PROSITE" id="PS50832">
    <property type="entry name" value="S1_IF1_TYPE"/>
    <property type="match status" value="1"/>
</dbReference>
<organism>
    <name type="scientific">Renibacterium salmoninarum (strain ATCC 33209 / DSM 20767 / JCM 11484 / NBRC 15589 / NCIMB 2235)</name>
    <dbReference type="NCBI Taxonomy" id="288705"/>
    <lineage>
        <taxon>Bacteria</taxon>
        <taxon>Bacillati</taxon>
        <taxon>Actinomycetota</taxon>
        <taxon>Actinomycetes</taxon>
        <taxon>Micrococcales</taxon>
        <taxon>Micrococcaceae</taxon>
        <taxon>Renibacterium</taxon>
    </lineage>
</organism>
<name>IF1_RENSM</name>
<proteinExistence type="inferred from homology"/>
<keyword id="KW-0963">Cytoplasm</keyword>
<keyword id="KW-0396">Initiation factor</keyword>
<keyword id="KW-0648">Protein biosynthesis</keyword>
<keyword id="KW-1185">Reference proteome</keyword>
<keyword id="KW-0694">RNA-binding</keyword>
<keyword id="KW-0699">rRNA-binding</keyword>
<accession>A9WSR5</accession>
<gene>
    <name evidence="1" type="primary">infA</name>
    <name type="ordered locus">RSal33209_2121</name>
</gene>
<evidence type="ECO:0000255" key="1">
    <source>
        <dbReference type="HAMAP-Rule" id="MF_00075"/>
    </source>
</evidence>
<reference key="1">
    <citation type="journal article" date="2008" name="J. Bacteriol.">
        <title>Genome sequence of the fish pathogen Renibacterium salmoninarum suggests reductive evolution away from an environmental Arthrobacter ancestor.</title>
        <authorList>
            <person name="Wiens G.D."/>
            <person name="Rockey D.D."/>
            <person name="Wu Z."/>
            <person name="Chang J."/>
            <person name="Levy R."/>
            <person name="Crane S."/>
            <person name="Chen D.S."/>
            <person name="Capri G.R."/>
            <person name="Burnett J.R."/>
            <person name="Sudheesh P.S."/>
            <person name="Schipma M.J."/>
            <person name="Burd H."/>
            <person name="Bhattacharyya A."/>
            <person name="Rhodes L.D."/>
            <person name="Kaul R."/>
            <person name="Strom M.S."/>
        </authorList>
    </citation>
    <scope>NUCLEOTIDE SEQUENCE [LARGE SCALE GENOMIC DNA]</scope>
    <source>
        <strain>ATCC 33209 / DSM 20767 / JCM 11484 / NBRC 15589 / NCIMB 2235</strain>
    </source>
</reference>